<dbReference type="EMBL" id="CP000802">
    <property type="protein sequence ID" value="ABV08314.1"/>
    <property type="status" value="ALT_INIT"/>
    <property type="molecule type" value="Genomic_DNA"/>
</dbReference>
<dbReference type="RefSeq" id="WP_001336056.1">
    <property type="nucleotide sequence ID" value="NC_009800.1"/>
</dbReference>
<dbReference type="SMR" id="A8A710"/>
<dbReference type="KEGG" id="ecx:EcHS_A4136"/>
<dbReference type="HOGENOM" id="CLU_000445_88_5_6"/>
<dbReference type="GO" id="GO:0005737">
    <property type="term" value="C:cytoplasm"/>
    <property type="evidence" value="ECO:0007669"/>
    <property type="project" value="UniProtKB-SubCell"/>
</dbReference>
<dbReference type="GO" id="GO:0003700">
    <property type="term" value="F:DNA-binding transcription factor activity"/>
    <property type="evidence" value="ECO:0007669"/>
    <property type="project" value="UniProtKB-UniRule"/>
</dbReference>
<dbReference type="GO" id="GO:0043565">
    <property type="term" value="F:sequence-specific DNA binding"/>
    <property type="evidence" value="ECO:0007669"/>
    <property type="project" value="InterPro"/>
</dbReference>
<dbReference type="GO" id="GO:0045893">
    <property type="term" value="P:positive regulation of DNA-templated transcription"/>
    <property type="evidence" value="ECO:0007669"/>
    <property type="project" value="UniProtKB-UniRule"/>
</dbReference>
<dbReference type="GO" id="GO:0019299">
    <property type="term" value="P:rhamnose metabolic process"/>
    <property type="evidence" value="ECO:0007669"/>
    <property type="project" value="UniProtKB-UniRule"/>
</dbReference>
<dbReference type="CDD" id="cd06977">
    <property type="entry name" value="cupin_RhaR_RhaS-like_N"/>
    <property type="match status" value="1"/>
</dbReference>
<dbReference type="Gene3D" id="1.10.10.60">
    <property type="entry name" value="Homeodomain-like"/>
    <property type="match status" value="2"/>
</dbReference>
<dbReference type="Gene3D" id="2.60.120.10">
    <property type="entry name" value="Jelly Rolls"/>
    <property type="match status" value="1"/>
</dbReference>
<dbReference type="HAMAP" id="MF_01533">
    <property type="entry name" value="HTH_type_RhaR"/>
    <property type="match status" value="1"/>
</dbReference>
<dbReference type="InterPro" id="IPR003313">
    <property type="entry name" value="AraC-bd"/>
</dbReference>
<dbReference type="InterPro" id="IPR009057">
    <property type="entry name" value="Homeodomain-like_sf"/>
</dbReference>
<dbReference type="InterPro" id="IPR018060">
    <property type="entry name" value="HTH_AraC"/>
</dbReference>
<dbReference type="InterPro" id="IPR018062">
    <property type="entry name" value="HTH_AraC-typ_CS"/>
</dbReference>
<dbReference type="InterPro" id="IPR047220">
    <property type="entry name" value="RhaR_RhaS-like_N"/>
</dbReference>
<dbReference type="InterPro" id="IPR014710">
    <property type="entry name" value="RmlC-like_jellyroll"/>
</dbReference>
<dbReference type="InterPro" id="IPR011051">
    <property type="entry name" value="RmlC_Cupin_sf"/>
</dbReference>
<dbReference type="InterPro" id="IPR023699">
    <property type="entry name" value="Tscrpt_act_RhaR"/>
</dbReference>
<dbReference type="InterPro" id="IPR020449">
    <property type="entry name" value="Tscrpt_reg_AraC-type_HTH"/>
</dbReference>
<dbReference type="NCBIfam" id="NF010025">
    <property type="entry name" value="PRK13500.1"/>
    <property type="match status" value="1"/>
</dbReference>
<dbReference type="NCBIfam" id="NF010026">
    <property type="entry name" value="PRK13501.1"/>
    <property type="match status" value="1"/>
</dbReference>
<dbReference type="NCBIfam" id="NF010027">
    <property type="entry name" value="PRK13502.1"/>
    <property type="match status" value="1"/>
</dbReference>
<dbReference type="PANTHER" id="PTHR43280">
    <property type="entry name" value="ARAC-FAMILY TRANSCRIPTIONAL REGULATOR"/>
    <property type="match status" value="1"/>
</dbReference>
<dbReference type="PANTHER" id="PTHR43280:SF13">
    <property type="entry name" value="HTH-TYPE TRANSCRIPTIONAL ACTIVATOR RHAR"/>
    <property type="match status" value="1"/>
</dbReference>
<dbReference type="Pfam" id="PF02311">
    <property type="entry name" value="AraC_binding"/>
    <property type="match status" value="1"/>
</dbReference>
<dbReference type="Pfam" id="PF12833">
    <property type="entry name" value="HTH_18"/>
    <property type="match status" value="1"/>
</dbReference>
<dbReference type="PRINTS" id="PR00032">
    <property type="entry name" value="HTHARAC"/>
</dbReference>
<dbReference type="SMART" id="SM00342">
    <property type="entry name" value="HTH_ARAC"/>
    <property type="match status" value="1"/>
</dbReference>
<dbReference type="SUPFAM" id="SSF46689">
    <property type="entry name" value="Homeodomain-like"/>
    <property type="match status" value="2"/>
</dbReference>
<dbReference type="SUPFAM" id="SSF51182">
    <property type="entry name" value="RmlC-like cupins"/>
    <property type="match status" value="1"/>
</dbReference>
<dbReference type="PROSITE" id="PS00041">
    <property type="entry name" value="HTH_ARAC_FAMILY_1"/>
    <property type="match status" value="1"/>
</dbReference>
<dbReference type="PROSITE" id="PS01124">
    <property type="entry name" value="HTH_ARAC_FAMILY_2"/>
    <property type="match status" value="1"/>
</dbReference>
<sequence length="282" mass="32373">MAHQLKLLKDDFFASDQQAVAVADRYPQDVFAEHTHDFCELVIVWRGNGLHVLNDRPYRITRGDLFYIHADDKHSYASVNDLVLQNIIYCPERLKLNLDWQGAIPGFNASAGQPHWRLGSMGMAQARQVIGQLEHESSQHVPFANEMAELLFGQLVMLLNRHRYTSDSLPPTSSETLLDKLITRLAASLKSPFALDKFCDEASCSERVLRQQFRQQTGMTINQYLRQVRVCHAQYLLQHSRLLISDISTECGFEDSNYFSVVFTRETGMTPSQWRHLNSQKD</sequence>
<gene>
    <name evidence="1" type="primary">rhaR</name>
    <name type="ordered locus">EcHS_A4136</name>
</gene>
<proteinExistence type="inferred from homology"/>
<feature type="chain" id="PRO_0000316896" description="HTH-type transcriptional activator RhaR">
    <location>
        <begin position="1"/>
        <end position="282"/>
    </location>
</feature>
<feature type="domain" description="HTH araC/xylS-type" evidence="1">
    <location>
        <begin position="179"/>
        <end position="277"/>
    </location>
</feature>
<feature type="DNA-binding region" description="H-T-H motif" evidence="1">
    <location>
        <begin position="196"/>
        <end position="217"/>
    </location>
</feature>
<feature type="DNA-binding region" description="H-T-H motif" evidence="1">
    <location>
        <begin position="244"/>
        <end position="267"/>
    </location>
</feature>
<feature type="site" description="Interaction with sigma-70" evidence="1">
    <location>
        <position position="246"/>
    </location>
</feature>
<organism>
    <name type="scientific">Escherichia coli O9:H4 (strain HS)</name>
    <dbReference type="NCBI Taxonomy" id="331112"/>
    <lineage>
        <taxon>Bacteria</taxon>
        <taxon>Pseudomonadati</taxon>
        <taxon>Pseudomonadota</taxon>
        <taxon>Gammaproteobacteria</taxon>
        <taxon>Enterobacterales</taxon>
        <taxon>Enterobacteriaceae</taxon>
        <taxon>Escherichia</taxon>
    </lineage>
</organism>
<evidence type="ECO:0000255" key="1">
    <source>
        <dbReference type="HAMAP-Rule" id="MF_01533"/>
    </source>
</evidence>
<evidence type="ECO:0000305" key="2"/>
<protein>
    <recommendedName>
        <fullName evidence="1">HTH-type transcriptional activator RhaR</fullName>
    </recommendedName>
    <alternativeName>
        <fullName evidence="1">L-rhamnose operon transcriptional activator RhaR</fullName>
    </alternativeName>
</protein>
<accession>A8A710</accession>
<name>RHAR_ECOHS</name>
<reference key="1">
    <citation type="journal article" date="2008" name="J. Bacteriol.">
        <title>The pangenome structure of Escherichia coli: comparative genomic analysis of E. coli commensal and pathogenic isolates.</title>
        <authorList>
            <person name="Rasko D.A."/>
            <person name="Rosovitz M.J."/>
            <person name="Myers G.S.A."/>
            <person name="Mongodin E.F."/>
            <person name="Fricke W.F."/>
            <person name="Gajer P."/>
            <person name="Crabtree J."/>
            <person name="Sebaihia M."/>
            <person name="Thomson N.R."/>
            <person name="Chaudhuri R."/>
            <person name="Henderson I.R."/>
            <person name="Sperandio V."/>
            <person name="Ravel J."/>
        </authorList>
    </citation>
    <scope>NUCLEOTIDE SEQUENCE [LARGE SCALE GENOMIC DNA]</scope>
    <source>
        <strain>HS</strain>
    </source>
</reference>
<keyword id="KW-0010">Activator</keyword>
<keyword id="KW-0963">Cytoplasm</keyword>
<keyword id="KW-0238">DNA-binding</keyword>
<keyword id="KW-0677">Repeat</keyword>
<keyword id="KW-0684">Rhamnose metabolism</keyword>
<keyword id="KW-0804">Transcription</keyword>
<keyword id="KW-0805">Transcription regulation</keyword>
<comment type="function">
    <text evidence="1">Activates expression of the rhaSR operon in response to L-rhamnose.</text>
</comment>
<comment type="subunit">
    <text evidence="1">Binds DNA as a dimer.</text>
</comment>
<comment type="subcellular location">
    <subcellularLocation>
        <location evidence="1">Cytoplasm</location>
    </subcellularLocation>
</comment>
<comment type="sequence caution" evidence="2">
    <conflict type="erroneous initiation">
        <sequence resource="EMBL-CDS" id="ABV08314"/>
    </conflict>
</comment>